<gene>
    <name type="primary">BTN1</name>
    <name type="ordered locus">KLLA0F01551g</name>
</gene>
<sequence length="387" mass="43485">MELDRDKKTFAYFWLFGLINNILYVVILSAASDIIGPSLPKSIVLLFDIMPSFLIKLSAPFFVHSIHYDKRIPILILLSMLGIILVSTRSLWLCLPGIVLASLSSGFGEITFLQLTHFFGSKSLTGWSSGTGGAGIVGSFSYLLLTTVFRLNIQLSLLLYAALPLIFLLYYKINDSIVSSQVYQSLDMPIDSSDGPIELLKSNGWVDIVKRLSKLVIPYMIPLSTVYLFEYLINQGVAPTLLFPIDTTPFVKYRDIYVTYGTLYQLGVFISRTWGHKLPVKNLYLFSVLQLINLLITLSQSYYYWTDSISWIMVLIFYEGLIGGSSYVNCFMNILKDVDPNEREFVLGSVSISDSLGTLIAAFLGIILEPSLCKHQIGTGRPWCRME</sequence>
<evidence type="ECO:0000250" key="1"/>
<evidence type="ECO:0000255" key="2"/>
<evidence type="ECO:0000305" key="3"/>
<name>BTN1_KLULA</name>
<organism>
    <name type="scientific">Kluyveromyces lactis (strain ATCC 8585 / CBS 2359 / DSM 70799 / NBRC 1267 / NRRL Y-1140 / WM37)</name>
    <name type="common">Yeast</name>
    <name type="synonym">Candida sphaerica</name>
    <dbReference type="NCBI Taxonomy" id="284590"/>
    <lineage>
        <taxon>Eukaryota</taxon>
        <taxon>Fungi</taxon>
        <taxon>Dikarya</taxon>
        <taxon>Ascomycota</taxon>
        <taxon>Saccharomycotina</taxon>
        <taxon>Saccharomycetes</taxon>
        <taxon>Saccharomycetales</taxon>
        <taxon>Saccharomycetaceae</taxon>
        <taxon>Kluyveromyces</taxon>
    </lineage>
</organism>
<dbReference type="EMBL" id="CR382126">
    <property type="protein sequence ID" value="CAG97857.1"/>
    <property type="molecule type" value="Genomic_DNA"/>
</dbReference>
<dbReference type="RefSeq" id="XP_455150.1">
    <property type="nucleotide sequence ID" value="XM_455150.1"/>
</dbReference>
<dbReference type="SMR" id="Q6CLN9"/>
<dbReference type="FunCoup" id="Q6CLN9">
    <property type="interactions" value="125"/>
</dbReference>
<dbReference type="STRING" id="284590.Q6CLN9"/>
<dbReference type="PaxDb" id="284590-Q6CLN9"/>
<dbReference type="KEGG" id="kla:KLLA0_F01551g"/>
<dbReference type="eggNOG" id="KOG3880">
    <property type="taxonomic scope" value="Eukaryota"/>
</dbReference>
<dbReference type="HOGENOM" id="CLU_029663_1_2_1"/>
<dbReference type="InParanoid" id="Q6CLN9"/>
<dbReference type="OMA" id="WLCNWQV"/>
<dbReference type="Proteomes" id="UP000000598">
    <property type="component" value="Chromosome F"/>
</dbReference>
<dbReference type="GO" id="GO:0005774">
    <property type="term" value="C:vacuolar membrane"/>
    <property type="evidence" value="ECO:0007669"/>
    <property type="project" value="UniProtKB-SubCell"/>
</dbReference>
<dbReference type="GO" id="GO:0006865">
    <property type="term" value="P:amino acid transport"/>
    <property type="evidence" value="ECO:0007669"/>
    <property type="project" value="UniProtKB-KW"/>
</dbReference>
<dbReference type="GO" id="GO:0051453">
    <property type="term" value="P:regulation of intracellular pH"/>
    <property type="evidence" value="ECO:0007669"/>
    <property type="project" value="TreeGrafter"/>
</dbReference>
<dbReference type="Gene3D" id="1.20.1250.20">
    <property type="entry name" value="MFS general substrate transporter like domains"/>
    <property type="match status" value="1"/>
</dbReference>
<dbReference type="InterPro" id="IPR003492">
    <property type="entry name" value="Battenin_disease_Cln3"/>
</dbReference>
<dbReference type="InterPro" id="IPR018460">
    <property type="entry name" value="Battenin_disease_Cln3_subgr"/>
</dbReference>
<dbReference type="InterPro" id="IPR036259">
    <property type="entry name" value="MFS_trans_sf"/>
</dbReference>
<dbReference type="PANTHER" id="PTHR10981">
    <property type="entry name" value="BATTENIN"/>
    <property type="match status" value="1"/>
</dbReference>
<dbReference type="PANTHER" id="PTHR10981:SF0">
    <property type="entry name" value="BATTENIN"/>
    <property type="match status" value="1"/>
</dbReference>
<dbReference type="Pfam" id="PF02487">
    <property type="entry name" value="CLN3"/>
    <property type="match status" value="2"/>
</dbReference>
<dbReference type="PIRSF" id="PIRSF015974">
    <property type="entry name" value="CLN3_BTN1"/>
    <property type="match status" value="1"/>
</dbReference>
<dbReference type="PRINTS" id="PR01315">
    <property type="entry name" value="BATTENIN"/>
</dbReference>
<dbReference type="SUPFAM" id="SSF103473">
    <property type="entry name" value="MFS general substrate transporter"/>
    <property type="match status" value="1"/>
</dbReference>
<reference key="1">
    <citation type="journal article" date="2004" name="Nature">
        <title>Genome evolution in yeasts.</title>
        <authorList>
            <person name="Dujon B."/>
            <person name="Sherman D."/>
            <person name="Fischer G."/>
            <person name="Durrens P."/>
            <person name="Casaregola S."/>
            <person name="Lafontaine I."/>
            <person name="de Montigny J."/>
            <person name="Marck C."/>
            <person name="Neuveglise C."/>
            <person name="Talla E."/>
            <person name="Goffard N."/>
            <person name="Frangeul L."/>
            <person name="Aigle M."/>
            <person name="Anthouard V."/>
            <person name="Babour A."/>
            <person name="Barbe V."/>
            <person name="Barnay S."/>
            <person name="Blanchin S."/>
            <person name="Beckerich J.-M."/>
            <person name="Beyne E."/>
            <person name="Bleykasten C."/>
            <person name="Boisrame A."/>
            <person name="Boyer J."/>
            <person name="Cattolico L."/>
            <person name="Confanioleri F."/>
            <person name="de Daruvar A."/>
            <person name="Despons L."/>
            <person name="Fabre E."/>
            <person name="Fairhead C."/>
            <person name="Ferry-Dumazet H."/>
            <person name="Groppi A."/>
            <person name="Hantraye F."/>
            <person name="Hennequin C."/>
            <person name="Jauniaux N."/>
            <person name="Joyet P."/>
            <person name="Kachouri R."/>
            <person name="Kerrest A."/>
            <person name="Koszul R."/>
            <person name="Lemaire M."/>
            <person name="Lesur I."/>
            <person name="Ma L."/>
            <person name="Muller H."/>
            <person name="Nicaud J.-M."/>
            <person name="Nikolski M."/>
            <person name="Oztas S."/>
            <person name="Ozier-Kalogeropoulos O."/>
            <person name="Pellenz S."/>
            <person name="Potier S."/>
            <person name="Richard G.-F."/>
            <person name="Straub M.-L."/>
            <person name="Suleau A."/>
            <person name="Swennen D."/>
            <person name="Tekaia F."/>
            <person name="Wesolowski-Louvel M."/>
            <person name="Westhof E."/>
            <person name="Wirth B."/>
            <person name="Zeniou-Meyer M."/>
            <person name="Zivanovic Y."/>
            <person name="Bolotin-Fukuhara M."/>
            <person name="Thierry A."/>
            <person name="Bouchier C."/>
            <person name="Caudron B."/>
            <person name="Scarpelli C."/>
            <person name="Gaillardin C."/>
            <person name="Weissenbach J."/>
            <person name="Wincker P."/>
            <person name="Souciet J.-L."/>
        </authorList>
    </citation>
    <scope>NUCLEOTIDE SEQUENCE [LARGE SCALE GENOMIC DNA]</scope>
    <source>
        <strain>ATCC 8585 / CBS 2359 / DSM 70799 / NBRC 1267 / NRRL Y-1140 / WM37</strain>
    </source>
</reference>
<feature type="signal peptide" evidence="2">
    <location>
        <begin position="1"/>
        <end position="31"/>
    </location>
</feature>
<feature type="chain" id="PRO_0000256263" description="Protein BTN1">
    <location>
        <begin position="32"/>
        <end position="387"/>
    </location>
</feature>
<feature type="transmembrane region" description="Helical" evidence="2">
    <location>
        <begin position="43"/>
        <end position="63"/>
    </location>
</feature>
<feature type="transmembrane region" description="Helical" evidence="2">
    <location>
        <begin position="72"/>
        <end position="92"/>
    </location>
</feature>
<feature type="transmembrane region" description="Helical" evidence="2">
    <location>
        <begin position="93"/>
        <end position="113"/>
    </location>
</feature>
<feature type="transmembrane region" description="Helical" evidence="2">
    <location>
        <begin position="129"/>
        <end position="149"/>
    </location>
</feature>
<feature type="transmembrane region" description="Helical" evidence="2">
    <location>
        <begin position="151"/>
        <end position="171"/>
    </location>
</feature>
<feature type="transmembrane region" description="Helical" evidence="2">
    <location>
        <begin position="225"/>
        <end position="245"/>
    </location>
</feature>
<feature type="transmembrane region" description="Helical" evidence="2">
    <location>
        <begin position="257"/>
        <end position="276"/>
    </location>
</feature>
<feature type="transmembrane region" description="Helical" evidence="2">
    <location>
        <begin position="278"/>
        <end position="298"/>
    </location>
</feature>
<feature type="transmembrane region" description="Helical" evidence="2">
    <location>
        <begin position="308"/>
        <end position="328"/>
    </location>
</feature>
<feature type="transmembrane region" description="Helical" evidence="2">
    <location>
        <begin position="347"/>
        <end position="367"/>
    </location>
</feature>
<proteinExistence type="inferred from homology"/>
<comment type="function">
    <text evidence="1">Involved in vacuolar transport and vacuole pH homeostasis. Also required for cytokinesis (By similarity).</text>
</comment>
<comment type="subcellular location">
    <subcellularLocation>
        <location evidence="1">Vacuole membrane</location>
        <topology evidence="1">Multi-pass membrane protein</topology>
    </subcellularLocation>
</comment>
<comment type="similarity">
    <text evidence="3">Belongs to the battenin family.</text>
</comment>
<protein>
    <recommendedName>
        <fullName>Protein BTN1</fullName>
    </recommendedName>
</protein>
<accession>Q6CLN9</accession>
<keyword id="KW-0029">Amino-acid transport</keyword>
<keyword id="KW-0472">Membrane</keyword>
<keyword id="KW-1185">Reference proteome</keyword>
<keyword id="KW-0732">Signal</keyword>
<keyword id="KW-0812">Transmembrane</keyword>
<keyword id="KW-1133">Transmembrane helix</keyword>
<keyword id="KW-0813">Transport</keyword>
<keyword id="KW-0926">Vacuole</keyword>